<reference key="1">
    <citation type="submission" date="1994-07" db="EMBL/GenBank/DDBJ databases">
        <title>Nucleotide sequence of phytochrome B gene from Soybean (Glycine max L.).</title>
        <authorList>
            <person name="Hahn T.R."/>
            <person name="Woo T.W."/>
            <person name="Seo H.S."/>
            <person name="Choi Y.D."/>
        </authorList>
    </citation>
    <scope>NUCLEOTIDE SEQUENCE [GENOMIC DNA]</scope>
    <source>
        <strain>cv. Paldal</strain>
        <tissue>Etiolated leaf</tissue>
    </source>
</reference>
<organism>
    <name type="scientific">Glycine max</name>
    <name type="common">Soybean</name>
    <name type="synonym">Glycine hispida</name>
    <dbReference type="NCBI Taxonomy" id="3847"/>
    <lineage>
        <taxon>Eukaryota</taxon>
        <taxon>Viridiplantae</taxon>
        <taxon>Streptophyta</taxon>
        <taxon>Embryophyta</taxon>
        <taxon>Tracheophyta</taxon>
        <taxon>Spermatophyta</taxon>
        <taxon>Magnoliopsida</taxon>
        <taxon>eudicotyledons</taxon>
        <taxon>Gunneridae</taxon>
        <taxon>Pentapetalae</taxon>
        <taxon>rosids</taxon>
        <taxon>fabids</taxon>
        <taxon>Fabales</taxon>
        <taxon>Fabaceae</taxon>
        <taxon>Papilionoideae</taxon>
        <taxon>50 kb inversion clade</taxon>
        <taxon>NPAAA clade</taxon>
        <taxon>indigoferoid/millettioid clade</taxon>
        <taxon>Phaseoleae</taxon>
        <taxon>Glycine</taxon>
        <taxon>Glycine subgen. Soja</taxon>
    </lineage>
</organism>
<gene>
    <name type="primary">PHYB</name>
</gene>
<sequence>MLQQAERRIPPFRRRKSTPHEQRLSHHSSNNNNNIDSMSKAIAQYTEDGVHAVFEQSGESGRSFNYSESIRIASESVPEQQITAYLVKIQRGGFIQPFGSMIAVDEPSFRILGYSDNARDMLGITPQSVPSLDDKNDAAFALGPQSVPSLDDKNDAAFALGTDVRALFTHSSALLLEKAFSAREISLMNPIWIHSRTSGKPFYGILHRIDVGIVIDLEPARTEDPALSIAGAVQSQEALVRAISQLQSLPSADVKLLCDTVVESVRELTGYDRVMVYKFHEDEHGEVVSESKRPDLEPYIGLHYPATDIPQASRFLFKQNRVRMIVDCHASAVRVVQDEALVQPLCLVGSTLGAPHGCHAQYMANMGSIASLVMAVIINGNDEEGVGGRSSMRLWGLVVCHHTSARCIPFPLRYACEFLMQAFGLQLNMELQLAAQSLEKRVLRTQTLLCDMLLRDSPTGIVTQSPSIMDLVKCDGAALYFQGNYYPLGVTPTEAQIRDIIEWLLAFHGDSTGLSTDSLGDAGYPGLPRLGMQFVGWQVAYITEKDFLFWFRSHTAKEIKWGGAKLILRTRMMGQRMHPLSSFKAFLEVVKSRSLPWENAEMDAIHSLQLILRDSFKDAEHRNSKAVVDPHVSEQELQGVDELSSVAREMVRLIETATAPIFAVDVDGHVNGWNAKVSELTGLPVEEAMGKSLVHDLVFKESEETVNKLLSREEDKNVETKMRTFGKEHQNKAAFLVVNACSSKHFTNNVVGVCFVGQNVTGQKIVMHKFINIQGDYKAIVHSPNPLIPPIFASDDNTCCLEWNTAMEKLDPSNENVTVGGVDVIGKMLVGEVFGSCCQLKGSDSITKFMIVLHNALGGQDTDKFPFSFLDRHGKYVQTFLTANKRVNMEGQIIGAFCFLQIMSPELQQALKAQRQQEKEFLGRMKELAYICQGVKKPLSGIRFTNSLLEATSLTNEQKQFLETSVACEKQMLKIIRDVDLESIEDGSLELEKGEFLLGNVINAVVSQVILLLRERNLQLIRDIPEEIKTLAVYGDQLRIQQVLSDFLLNIVRYAPSPDGWVEIHVRPRIKQISDGLTLLHAEFRMVCPGEGLPPELIQDMFNNSRWGTQEGLGLSMSRKILKLMNGEVQYIREAERCYFYVLLELPVTRRSSKKC</sequence>
<name>PHYB_SOYBN</name>
<dbReference type="EMBL" id="L34843">
    <property type="protein sequence ID" value="AAA34000.1"/>
    <property type="molecule type" value="Genomic_DNA"/>
</dbReference>
<dbReference type="PIR" id="T07756">
    <property type="entry name" value="T07756"/>
</dbReference>
<dbReference type="SMR" id="P42499"/>
<dbReference type="FunCoup" id="P42499">
    <property type="interactions" value="1499"/>
</dbReference>
<dbReference type="STRING" id="3847.P42499"/>
<dbReference type="PaxDb" id="3847-GLYMA09G03990.1"/>
<dbReference type="eggNOG" id="ENOG502QRNS">
    <property type="taxonomic scope" value="Eukaryota"/>
</dbReference>
<dbReference type="InParanoid" id="P42499"/>
<dbReference type="Proteomes" id="UP000008827">
    <property type="component" value="Unplaced"/>
</dbReference>
<dbReference type="GO" id="GO:0005634">
    <property type="term" value="C:nucleus"/>
    <property type="evidence" value="ECO:0000318"/>
    <property type="project" value="GO_Central"/>
</dbReference>
<dbReference type="GO" id="GO:0000155">
    <property type="term" value="F:phosphorelay sensor kinase activity"/>
    <property type="evidence" value="ECO:0007669"/>
    <property type="project" value="InterPro"/>
</dbReference>
<dbReference type="GO" id="GO:0009881">
    <property type="term" value="F:photoreceptor activity"/>
    <property type="evidence" value="ECO:0007669"/>
    <property type="project" value="UniProtKB-KW"/>
</dbReference>
<dbReference type="GO" id="GO:0042803">
    <property type="term" value="F:protein homodimerization activity"/>
    <property type="evidence" value="ECO:0007669"/>
    <property type="project" value="InterPro"/>
</dbReference>
<dbReference type="GO" id="GO:0009584">
    <property type="term" value="P:detection of visible light"/>
    <property type="evidence" value="ECO:0007669"/>
    <property type="project" value="InterPro"/>
</dbReference>
<dbReference type="GO" id="GO:0009585">
    <property type="term" value="P:red, far-red light phototransduction"/>
    <property type="evidence" value="ECO:0007669"/>
    <property type="project" value="UniProtKB-KW"/>
</dbReference>
<dbReference type="GO" id="GO:0006355">
    <property type="term" value="P:regulation of DNA-templated transcription"/>
    <property type="evidence" value="ECO:0007669"/>
    <property type="project" value="InterPro"/>
</dbReference>
<dbReference type="CDD" id="cd16932">
    <property type="entry name" value="HATPase_Phy-like"/>
    <property type="match status" value="1"/>
</dbReference>
<dbReference type="CDD" id="cd00082">
    <property type="entry name" value="HisKA"/>
    <property type="match status" value="1"/>
</dbReference>
<dbReference type="CDD" id="cd00130">
    <property type="entry name" value="PAS"/>
    <property type="match status" value="1"/>
</dbReference>
<dbReference type="FunFam" id="3.30.450.20:FF:000034">
    <property type="entry name" value="Phytochrome"/>
    <property type="match status" value="1"/>
</dbReference>
<dbReference type="FunFam" id="3.30.450.20:FF:000039">
    <property type="entry name" value="Phytochrome"/>
    <property type="match status" value="1"/>
</dbReference>
<dbReference type="FunFam" id="3.30.450.270:FF:000001">
    <property type="entry name" value="Phytochrome"/>
    <property type="match status" value="1"/>
</dbReference>
<dbReference type="FunFam" id="3.30.565.10:FF:000044">
    <property type="entry name" value="Phytochrome"/>
    <property type="match status" value="1"/>
</dbReference>
<dbReference type="Gene3D" id="1.10.287.130">
    <property type="match status" value="1"/>
</dbReference>
<dbReference type="Gene3D" id="3.30.450.270">
    <property type="match status" value="1"/>
</dbReference>
<dbReference type="Gene3D" id="3.30.450.40">
    <property type="match status" value="1"/>
</dbReference>
<dbReference type="Gene3D" id="3.30.565.10">
    <property type="entry name" value="Histidine kinase-like ATPase, C-terminal domain"/>
    <property type="match status" value="1"/>
</dbReference>
<dbReference type="Gene3D" id="3.30.450.20">
    <property type="entry name" value="PAS domain"/>
    <property type="match status" value="2"/>
</dbReference>
<dbReference type="InterPro" id="IPR003018">
    <property type="entry name" value="GAF"/>
</dbReference>
<dbReference type="InterPro" id="IPR029016">
    <property type="entry name" value="GAF-like_dom_sf"/>
</dbReference>
<dbReference type="InterPro" id="IPR036890">
    <property type="entry name" value="HATPase_C_sf"/>
</dbReference>
<dbReference type="InterPro" id="IPR005467">
    <property type="entry name" value="His_kinase_dom"/>
</dbReference>
<dbReference type="InterPro" id="IPR003661">
    <property type="entry name" value="HisK_dim/P_dom"/>
</dbReference>
<dbReference type="InterPro" id="IPR000014">
    <property type="entry name" value="PAS"/>
</dbReference>
<dbReference type="InterPro" id="IPR035965">
    <property type="entry name" value="PAS-like_dom_sf"/>
</dbReference>
<dbReference type="InterPro" id="IPR013654">
    <property type="entry name" value="PAS_2"/>
</dbReference>
<dbReference type="InterPro" id="IPR013767">
    <property type="entry name" value="PAS_fold"/>
</dbReference>
<dbReference type="InterPro" id="IPR044767">
    <property type="entry name" value="Phy_HATPase-like"/>
</dbReference>
<dbReference type="InterPro" id="IPR016132">
    <property type="entry name" value="Phyto_chromo_attachment"/>
</dbReference>
<dbReference type="InterPro" id="IPR013516">
    <property type="entry name" value="Phyto_chromo_BS"/>
</dbReference>
<dbReference type="InterPro" id="IPR001294">
    <property type="entry name" value="Phytochrome"/>
</dbReference>
<dbReference type="InterPro" id="IPR012129">
    <property type="entry name" value="Phytochrome_A-E"/>
</dbReference>
<dbReference type="InterPro" id="IPR013515">
    <property type="entry name" value="Phytochrome_cen-reg"/>
</dbReference>
<dbReference type="InterPro" id="IPR043150">
    <property type="entry name" value="Phytochrome_PHY_sf"/>
</dbReference>
<dbReference type="NCBIfam" id="TIGR00229">
    <property type="entry name" value="sensory_box"/>
    <property type="match status" value="1"/>
</dbReference>
<dbReference type="PANTHER" id="PTHR47876">
    <property type="entry name" value="OS08G0260000 PROTEIN"/>
    <property type="match status" value="1"/>
</dbReference>
<dbReference type="PANTHER" id="PTHR47876:SF3">
    <property type="entry name" value="PHYTOCHROME 1"/>
    <property type="match status" value="1"/>
</dbReference>
<dbReference type="Pfam" id="PF01590">
    <property type="entry name" value="GAF"/>
    <property type="match status" value="1"/>
</dbReference>
<dbReference type="Pfam" id="PF02518">
    <property type="entry name" value="HATPase_c"/>
    <property type="match status" value="1"/>
</dbReference>
<dbReference type="Pfam" id="PF00512">
    <property type="entry name" value="HisKA"/>
    <property type="match status" value="1"/>
</dbReference>
<dbReference type="Pfam" id="PF00989">
    <property type="entry name" value="PAS"/>
    <property type="match status" value="2"/>
</dbReference>
<dbReference type="Pfam" id="PF08446">
    <property type="entry name" value="PAS_2"/>
    <property type="match status" value="1"/>
</dbReference>
<dbReference type="Pfam" id="PF00360">
    <property type="entry name" value="PHY"/>
    <property type="match status" value="1"/>
</dbReference>
<dbReference type="PIRSF" id="PIRSF000084">
    <property type="entry name" value="Phytochrome"/>
    <property type="match status" value="1"/>
</dbReference>
<dbReference type="PRINTS" id="PR01033">
    <property type="entry name" value="PHYTOCHROME"/>
</dbReference>
<dbReference type="SMART" id="SM00065">
    <property type="entry name" value="GAF"/>
    <property type="match status" value="1"/>
</dbReference>
<dbReference type="SMART" id="SM00387">
    <property type="entry name" value="HATPase_c"/>
    <property type="match status" value="1"/>
</dbReference>
<dbReference type="SMART" id="SM00388">
    <property type="entry name" value="HisKA"/>
    <property type="match status" value="1"/>
</dbReference>
<dbReference type="SMART" id="SM00091">
    <property type="entry name" value="PAS"/>
    <property type="match status" value="2"/>
</dbReference>
<dbReference type="SUPFAM" id="SSF55874">
    <property type="entry name" value="ATPase domain of HSP90 chaperone/DNA topoisomerase II/histidine kinase"/>
    <property type="match status" value="1"/>
</dbReference>
<dbReference type="SUPFAM" id="SSF55781">
    <property type="entry name" value="GAF domain-like"/>
    <property type="match status" value="2"/>
</dbReference>
<dbReference type="SUPFAM" id="SSF55785">
    <property type="entry name" value="PYP-like sensor domain (PAS domain)"/>
    <property type="match status" value="2"/>
</dbReference>
<dbReference type="PROSITE" id="PS50109">
    <property type="entry name" value="HIS_KIN"/>
    <property type="match status" value="1"/>
</dbReference>
<dbReference type="PROSITE" id="PS50112">
    <property type="entry name" value="PAS"/>
    <property type="match status" value="1"/>
</dbReference>
<dbReference type="PROSITE" id="PS00245">
    <property type="entry name" value="PHYTOCHROME_1"/>
    <property type="match status" value="1"/>
</dbReference>
<dbReference type="PROSITE" id="PS50046">
    <property type="entry name" value="PHYTOCHROME_2"/>
    <property type="match status" value="1"/>
</dbReference>
<keyword id="KW-0157">Chromophore</keyword>
<keyword id="KW-0600">Photoreceptor protein</keyword>
<keyword id="KW-0607">Phytochrome signaling pathway</keyword>
<keyword id="KW-0675">Receptor</keyword>
<keyword id="KW-1185">Reference proteome</keyword>
<keyword id="KW-0716">Sensory transduction</keyword>
<keyword id="KW-0804">Transcription</keyword>
<keyword id="KW-0805">Transcription regulation</keyword>
<proteinExistence type="inferred from homology"/>
<feature type="chain" id="PRO_0000171991" description="Phytochrome B">
    <location>
        <begin position="1"/>
        <end position="1156"/>
    </location>
</feature>
<feature type="domain" description="GAF" evidence="6">
    <location>
        <begin position="253"/>
        <end position="431"/>
    </location>
</feature>
<feature type="domain" description="PAS 1" evidence="4">
    <location>
        <begin position="646"/>
        <end position="717"/>
    </location>
</feature>
<feature type="domain" description="PAS 2" evidence="4">
    <location>
        <begin position="776"/>
        <end position="853"/>
    </location>
</feature>
<feature type="domain" description="Histidine kinase" evidence="3">
    <location>
        <begin position="930"/>
        <end position="1150"/>
    </location>
</feature>
<feature type="region of interest" description="Disordered" evidence="5">
    <location>
        <begin position="1"/>
        <end position="35"/>
    </location>
</feature>
<feature type="binding site" description="covalent" evidence="1">
    <location>
        <position position="358"/>
    </location>
    <ligand>
        <name>phytochromobilin</name>
        <dbReference type="ChEBI" id="CHEBI:189064"/>
    </ligand>
</feature>
<comment type="function">
    <text evidence="2">Regulatory photoreceptor which exists in two forms that are reversibly interconvertible by light: the Pr form that absorbs maximally in the red region of the spectrum and the Pfr form that absorbs maximally in the far-red region. Photoconversion of Pr to Pfr induces an array of morphogenic responses, whereas reconversion of Pfr to Pr cancels the induction of those responses. Pfr controls the expression of a number of nuclear genes including those encoding the small subunit of ribulose-bisphosphate carboxylase, chlorophyll A/B binding protein, protochlorophyllide reductase, rRNA, etc. It also controls the expression of its own gene(s) in a negative feedback fashion.</text>
</comment>
<comment type="subunit">
    <text evidence="2">Homodimer.</text>
</comment>
<comment type="PTM">
    <text evidence="1">Contains one covalently linked phytochromobilin chromophore.</text>
</comment>
<comment type="similarity">
    <text evidence="6">Belongs to the phytochrome family.</text>
</comment>
<accession>P42499</accession>
<protein>
    <recommendedName>
        <fullName>Phytochrome B</fullName>
    </recommendedName>
</protein>
<evidence type="ECO:0000250" key="1">
    <source>
        <dbReference type="UniProtKB" id="I1MGE5"/>
    </source>
</evidence>
<evidence type="ECO:0000250" key="2">
    <source>
        <dbReference type="UniProtKB" id="P14713"/>
    </source>
</evidence>
<evidence type="ECO:0000255" key="3">
    <source>
        <dbReference type="PROSITE-ProRule" id="PRU00107"/>
    </source>
</evidence>
<evidence type="ECO:0000255" key="4">
    <source>
        <dbReference type="PROSITE-ProRule" id="PRU00140"/>
    </source>
</evidence>
<evidence type="ECO:0000256" key="5">
    <source>
        <dbReference type="SAM" id="MobiDB-lite"/>
    </source>
</evidence>
<evidence type="ECO:0000305" key="6"/>